<dbReference type="EMBL" id="AC002336">
    <property type="protein sequence ID" value="AAB87577.1"/>
    <property type="molecule type" value="Genomic_DNA"/>
</dbReference>
<dbReference type="EMBL" id="CP002685">
    <property type="protein sequence ID" value="AEC09854.1"/>
    <property type="molecule type" value="Genomic_DNA"/>
</dbReference>
<dbReference type="EMBL" id="AY086770">
    <property type="protein sequence ID" value="AAM63821.1"/>
    <property type="molecule type" value="mRNA"/>
</dbReference>
<dbReference type="PIR" id="F84831">
    <property type="entry name" value="F84831"/>
</dbReference>
<dbReference type="RefSeq" id="NP_181593.1">
    <property type="nucleotide sequence ID" value="NM_129623.3"/>
</dbReference>
<dbReference type="SMR" id="O22874"/>
<dbReference type="FunCoup" id="O22874">
    <property type="interactions" value="4"/>
</dbReference>
<dbReference type="STRING" id="3702.O22874"/>
<dbReference type="PaxDb" id="3702-AT2G40610.1"/>
<dbReference type="ProteomicsDB" id="221818"/>
<dbReference type="EnsemblPlants" id="AT2G40610.1">
    <property type="protein sequence ID" value="AT2G40610.1"/>
    <property type="gene ID" value="AT2G40610"/>
</dbReference>
<dbReference type="GeneID" id="818656"/>
<dbReference type="Gramene" id="AT2G40610.1">
    <property type="protein sequence ID" value="AT2G40610.1"/>
    <property type="gene ID" value="AT2G40610"/>
</dbReference>
<dbReference type="KEGG" id="ath:AT2G40610"/>
<dbReference type="Araport" id="AT2G40610"/>
<dbReference type="TAIR" id="AT2G40610">
    <property type="gene designation" value="EXPA8"/>
</dbReference>
<dbReference type="eggNOG" id="ENOG502QPUJ">
    <property type="taxonomic scope" value="Eukaryota"/>
</dbReference>
<dbReference type="HOGENOM" id="CLU_027462_0_1_1"/>
<dbReference type="InParanoid" id="O22874"/>
<dbReference type="OMA" id="DNAGASC"/>
<dbReference type="OrthoDB" id="5823761at2759"/>
<dbReference type="PhylomeDB" id="O22874"/>
<dbReference type="PRO" id="PR:O22874"/>
<dbReference type="Proteomes" id="UP000006548">
    <property type="component" value="Chromosome 2"/>
</dbReference>
<dbReference type="ExpressionAtlas" id="O22874">
    <property type="expression patterns" value="baseline and differential"/>
</dbReference>
<dbReference type="GO" id="GO:0005576">
    <property type="term" value="C:extracellular region"/>
    <property type="evidence" value="ECO:0007669"/>
    <property type="project" value="UniProtKB-KW"/>
</dbReference>
<dbReference type="GO" id="GO:0016020">
    <property type="term" value="C:membrane"/>
    <property type="evidence" value="ECO:0007669"/>
    <property type="project" value="UniProtKB-SubCell"/>
</dbReference>
<dbReference type="GO" id="GO:0009828">
    <property type="term" value="P:plant-type cell wall loosening"/>
    <property type="evidence" value="ECO:0000250"/>
    <property type="project" value="UniProtKB"/>
</dbReference>
<dbReference type="GO" id="GO:0009635">
    <property type="term" value="P:response to herbicide"/>
    <property type="evidence" value="ECO:0000270"/>
    <property type="project" value="TAIR"/>
</dbReference>
<dbReference type="GO" id="GO:0006949">
    <property type="term" value="P:syncytium formation"/>
    <property type="evidence" value="ECO:0000270"/>
    <property type="project" value="TAIR"/>
</dbReference>
<dbReference type="CDD" id="cd22274">
    <property type="entry name" value="DPBB_EXPA_N"/>
    <property type="match status" value="1"/>
</dbReference>
<dbReference type="FunFam" id="2.40.40.10:FF:000001">
    <property type="entry name" value="Expansin"/>
    <property type="match status" value="1"/>
</dbReference>
<dbReference type="FunFam" id="2.60.40.760:FF:000001">
    <property type="entry name" value="Expansin"/>
    <property type="match status" value="1"/>
</dbReference>
<dbReference type="Gene3D" id="2.60.40.760">
    <property type="entry name" value="Expansin, cellulose-binding-like domain"/>
    <property type="match status" value="1"/>
</dbReference>
<dbReference type="Gene3D" id="2.40.40.10">
    <property type="entry name" value="RlpA-like domain"/>
    <property type="match status" value="1"/>
</dbReference>
<dbReference type="InterPro" id="IPR007118">
    <property type="entry name" value="Expan_Lol_pI"/>
</dbReference>
<dbReference type="InterPro" id="IPR002963">
    <property type="entry name" value="Expansin"/>
</dbReference>
<dbReference type="InterPro" id="IPR007112">
    <property type="entry name" value="Expansin/allergen_DPBB_dom"/>
</dbReference>
<dbReference type="InterPro" id="IPR007117">
    <property type="entry name" value="Expansin_CBD"/>
</dbReference>
<dbReference type="InterPro" id="IPR036749">
    <property type="entry name" value="Expansin_CBD_sf"/>
</dbReference>
<dbReference type="InterPro" id="IPR009009">
    <property type="entry name" value="RlpA-like_DPBB"/>
</dbReference>
<dbReference type="InterPro" id="IPR036908">
    <property type="entry name" value="RlpA-like_sf"/>
</dbReference>
<dbReference type="PANTHER" id="PTHR31867">
    <property type="entry name" value="EXPANSIN-A15"/>
    <property type="match status" value="1"/>
</dbReference>
<dbReference type="Pfam" id="PF03330">
    <property type="entry name" value="DPBB_1"/>
    <property type="match status" value="1"/>
</dbReference>
<dbReference type="Pfam" id="PF01357">
    <property type="entry name" value="Expansin_C"/>
    <property type="match status" value="1"/>
</dbReference>
<dbReference type="PRINTS" id="PR01226">
    <property type="entry name" value="EXPANSIN"/>
</dbReference>
<dbReference type="PRINTS" id="PR01225">
    <property type="entry name" value="EXPANSNFAMLY"/>
</dbReference>
<dbReference type="SMART" id="SM00837">
    <property type="entry name" value="DPBB_1"/>
    <property type="match status" value="1"/>
</dbReference>
<dbReference type="SUPFAM" id="SSF50685">
    <property type="entry name" value="Barwin-like endoglucanases"/>
    <property type="match status" value="1"/>
</dbReference>
<dbReference type="SUPFAM" id="SSF49590">
    <property type="entry name" value="PHL pollen allergen"/>
    <property type="match status" value="1"/>
</dbReference>
<dbReference type="PROSITE" id="PS50843">
    <property type="entry name" value="EXPANSIN_CBD"/>
    <property type="match status" value="1"/>
</dbReference>
<dbReference type="PROSITE" id="PS50842">
    <property type="entry name" value="EXPANSIN_EG45"/>
    <property type="match status" value="1"/>
</dbReference>
<proteinExistence type="evidence at transcript level"/>
<protein>
    <recommendedName>
        <fullName>Expansin-A8</fullName>
        <shortName>AtEXPA8</shortName>
    </recommendedName>
    <alternativeName>
        <fullName>Alpha-expansin-8</fullName>
        <shortName>At-EXP8</shortName>
        <shortName>AtEx8</shortName>
    </alternativeName>
    <alternativeName>
        <fullName>Ath-ExpAlpha-1.11</fullName>
    </alternativeName>
</protein>
<feature type="signal peptide" evidence="2">
    <location>
        <begin position="1"/>
        <end position="25"/>
    </location>
</feature>
<feature type="chain" id="PRO_0000008689" description="Expansin-A8">
    <location>
        <begin position="26"/>
        <end position="253"/>
    </location>
</feature>
<feature type="domain" description="Expansin-like EG45" evidence="4">
    <location>
        <begin position="48"/>
        <end position="160"/>
    </location>
</feature>
<feature type="domain" description="Expansin-like CBD" evidence="3">
    <location>
        <begin position="170"/>
        <end position="250"/>
    </location>
</feature>
<feature type="disulfide bond" evidence="4">
    <location>
        <begin position="51"/>
        <end position="79"/>
    </location>
</feature>
<feature type="disulfide bond" evidence="4">
    <location>
        <begin position="82"/>
        <end position="155"/>
    </location>
</feature>
<feature type="disulfide bond" evidence="4">
    <location>
        <begin position="87"/>
        <end position="94"/>
    </location>
</feature>
<name>EXPA8_ARATH</name>
<keyword id="KW-0134">Cell wall</keyword>
<keyword id="KW-0961">Cell wall biogenesis/degradation</keyword>
<keyword id="KW-1015">Disulfide bond</keyword>
<keyword id="KW-0472">Membrane</keyword>
<keyword id="KW-1185">Reference proteome</keyword>
<keyword id="KW-0964">Secreted</keyword>
<keyword id="KW-0732">Signal</keyword>
<organism>
    <name type="scientific">Arabidopsis thaliana</name>
    <name type="common">Mouse-ear cress</name>
    <dbReference type="NCBI Taxonomy" id="3702"/>
    <lineage>
        <taxon>Eukaryota</taxon>
        <taxon>Viridiplantae</taxon>
        <taxon>Streptophyta</taxon>
        <taxon>Embryophyta</taxon>
        <taxon>Tracheophyta</taxon>
        <taxon>Spermatophyta</taxon>
        <taxon>Magnoliopsida</taxon>
        <taxon>eudicotyledons</taxon>
        <taxon>Gunneridae</taxon>
        <taxon>Pentapetalae</taxon>
        <taxon>rosids</taxon>
        <taxon>malvids</taxon>
        <taxon>Brassicales</taxon>
        <taxon>Brassicaceae</taxon>
        <taxon>Camelineae</taxon>
        <taxon>Arabidopsis</taxon>
    </lineage>
</organism>
<accession>O22874</accession>
<sequence length="253" mass="27260">MYTPSYLKYSIISIISVLFLQGTHGDDGGWQGGHATFYGGEDASGTMGGACGYGNLYGQGYGTNTAALSTALFNNGLTCGACYEMKCNDDPRWCLGSTITVTATNFCPPNPGLSNDNGGWCNPPLQHFDLAEPAFLQIAQYRAGIVPVSFRRVPCMKKGGIRFTINGHSYFNLVLISNVGGAGDVHAVSIKGSKTQSWQAMSRNWGQNWQSNSYMNDQSLSFQVTTSDGRTLVSNDVAPSNWQFGQTYQGGQF</sequence>
<comment type="function">
    <text evidence="1">Causes loosening and extension of plant cell walls by disrupting non-covalent bonding between cellulose microfibrils and matrix glucans. No enzymatic activity has been found (By similarity).</text>
</comment>
<comment type="subcellular location">
    <subcellularLocation>
        <location>Secreted</location>
        <location>Cell wall</location>
    </subcellularLocation>
    <subcellularLocation>
        <location>Membrane</location>
        <topology>Peripheral membrane protein</topology>
    </subcellularLocation>
</comment>
<comment type="similarity">
    <text evidence="5">Belongs to the expansin family. Expansin A subfamily.</text>
</comment>
<comment type="online information" name="EXPANSIN homepage">
    <link uri="https://www.dept.psu.edu/biology/groups/expansins/index.htm"/>
</comment>
<evidence type="ECO:0000250" key="1"/>
<evidence type="ECO:0000255" key="2"/>
<evidence type="ECO:0000255" key="3">
    <source>
        <dbReference type="PROSITE-ProRule" id="PRU00078"/>
    </source>
</evidence>
<evidence type="ECO:0000255" key="4">
    <source>
        <dbReference type="PROSITE-ProRule" id="PRU00079"/>
    </source>
</evidence>
<evidence type="ECO:0000305" key="5"/>
<reference key="1">
    <citation type="journal article" date="1999" name="Nature">
        <title>Sequence and analysis of chromosome 2 of the plant Arabidopsis thaliana.</title>
        <authorList>
            <person name="Lin X."/>
            <person name="Kaul S."/>
            <person name="Rounsley S.D."/>
            <person name="Shea T.P."/>
            <person name="Benito M.-I."/>
            <person name="Town C.D."/>
            <person name="Fujii C.Y."/>
            <person name="Mason T.M."/>
            <person name="Bowman C.L."/>
            <person name="Barnstead M.E."/>
            <person name="Feldblyum T.V."/>
            <person name="Buell C.R."/>
            <person name="Ketchum K.A."/>
            <person name="Lee J.J."/>
            <person name="Ronning C.M."/>
            <person name="Koo H.L."/>
            <person name="Moffat K.S."/>
            <person name="Cronin L.A."/>
            <person name="Shen M."/>
            <person name="Pai G."/>
            <person name="Van Aken S."/>
            <person name="Umayam L."/>
            <person name="Tallon L.J."/>
            <person name="Gill J.E."/>
            <person name="Adams M.D."/>
            <person name="Carrera A.J."/>
            <person name="Creasy T.H."/>
            <person name="Goodman H.M."/>
            <person name="Somerville C.R."/>
            <person name="Copenhaver G.P."/>
            <person name="Preuss D."/>
            <person name="Nierman W.C."/>
            <person name="White O."/>
            <person name="Eisen J.A."/>
            <person name="Salzberg S.L."/>
            <person name="Fraser C.M."/>
            <person name="Venter J.C."/>
        </authorList>
    </citation>
    <scope>NUCLEOTIDE SEQUENCE [LARGE SCALE GENOMIC DNA]</scope>
    <source>
        <strain>cv. Columbia</strain>
    </source>
</reference>
<reference key="2">
    <citation type="journal article" date="2017" name="Plant J.">
        <title>Araport11: a complete reannotation of the Arabidopsis thaliana reference genome.</title>
        <authorList>
            <person name="Cheng C.Y."/>
            <person name="Krishnakumar V."/>
            <person name="Chan A.P."/>
            <person name="Thibaud-Nissen F."/>
            <person name="Schobel S."/>
            <person name="Town C.D."/>
        </authorList>
    </citation>
    <scope>GENOME REANNOTATION</scope>
    <source>
        <strain>cv. Columbia</strain>
    </source>
</reference>
<reference key="3">
    <citation type="submission" date="2002-03" db="EMBL/GenBank/DDBJ databases">
        <title>Full-length cDNA from Arabidopsis thaliana.</title>
        <authorList>
            <person name="Brover V.V."/>
            <person name="Troukhan M.E."/>
            <person name="Alexandrov N.A."/>
            <person name="Lu Y.-P."/>
            <person name="Flavell R.B."/>
            <person name="Feldmann K.A."/>
        </authorList>
    </citation>
    <scope>NUCLEOTIDE SEQUENCE [LARGE SCALE MRNA]</scope>
</reference>
<reference key="4">
    <citation type="journal article" date="2004" name="Plant Mol. Biol.">
        <title>Nomenclature for members of the expansin superfamily of genes and proteins.</title>
        <authorList>
            <person name="Kende H."/>
            <person name="Bradford K.J."/>
            <person name="Brummell D.A."/>
            <person name="Cho H.-T."/>
            <person name="Cosgrove D.J."/>
            <person name="Fleming A.J."/>
            <person name="Gehring C."/>
            <person name="Lee Y."/>
            <person name="McQueen-Mason S.J."/>
            <person name="Rose J.K.C."/>
            <person name="Voesenek L.A.C."/>
        </authorList>
    </citation>
    <scope>NOMENCLATURE</scope>
</reference>
<gene>
    <name type="primary">EXPA8</name>
    <name type="synonym">EXP8</name>
    <name type="ordered locus">At2g40610</name>
    <name type="ORF">T2P4.4</name>
</gene>